<organism>
    <name type="scientific">Mus musculus</name>
    <name type="common">Mouse</name>
    <dbReference type="NCBI Taxonomy" id="10090"/>
    <lineage>
        <taxon>Eukaryota</taxon>
        <taxon>Metazoa</taxon>
        <taxon>Chordata</taxon>
        <taxon>Craniata</taxon>
        <taxon>Vertebrata</taxon>
        <taxon>Euteleostomi</taxon>
        <taxon>Mammalia</taxon>
        <taxon>Eutheria</taxon>
        <taxon>Euarchontoglires</taxon>
        <taxon>Glires</taxon>
        <taxon>Rodentia</taxon>
        <taxon>Myomorpha</taxon>
        <taxon>Muroidea</taxon>
        <taxon>Muridae</taxon>
        <taxon>Murinae</taxon>
        <taxon>Mus</taxon>
        <taxon>Mus</taxon>
    </lineage>
</organism>
<name>MAST4_MOUSE</name>
<accession>Q811L6</accession>
<accession>E9QAH7</accession>
<accession>Q3UVE7</accession>
<accession>Q62489</accession>
<accession>Q6ZQE0</accession>
<accession>Q8BME3</accession>
<evidence type="ECO:0000250" key="1">
    <source>
        <dbReference type="UniProtKB" id="O15021"/>
    </source>
</evidence>
<evidence type="ECO:0000250" key="2">
    <source>
        <dbReference type="UniProtKB" id="P28523"/>
    </source>
</evidence>
<evidence type="ECO:0000250" key="3">
    <source>
        <dbReference type="UniProtKB" id="Q60592"/>
    </source>
</evidence>
<evidence type="ECO:0000255" key="4">
    <source>
        <dbReference type="PROSITE-ProRule" id="PRU00143"/>
    </source>
</evidence>
<evidence type="ECO:0000255" key="5">
    <source>
        <dbReference type="PROSITE-ProRule" id="PRU00159"/>
    </source>
</evidence>
<evidence type="ECO:0000255" key="6">
    <source>
        <dbReference type="PROSITE-ProRule" id="PRU00618"/>
    </source>
</evidence>
<evidence type="ECO:0000255" key="7">
    <source>
        <dbReference type="PROSITE-ProRule" id="PRU10027"/>
    </source>
</evidence>
<evidence type="ECO:0000256" key="8">
    <source>
        <dbReference type="SAM" id="MobiDB-lite"/>
    </source>
</evidence>
<evidence type="ECO:0000269" key="9">
    <source>
    </source>
</evidence>
<evidence type="ECO:0000269" key="10">
    <source>
    </source>
</evidence>
<evidence type="ECO:0000269" key="11">
    <source>
    </source>
</evidence>
<evidence type="ECO:0000269" key="12">
    <source>
    </source>
</evidence>
<evidence type="ECO:0000303" key="13">
    <source>
    </source>
</evidence>
<evidence type="ECO:0000305" key="14"/>
<evidence type="ECO:0000312" key="15">
    <source>
        <dbReference type="EMBL" id="AAH42511.1"/>
    </source>
</evidence>
<evidence type="ECO:0000312" key="16">
    <source>
        <dbReference type="EMBL" id="BAC97924.1"/>
    </source>
</evidence>
<evidence type="ECO:0000312" key="17">
    <source>
        <dbReference type="EMBL" id="BAE23322.1"/>
    </source>
</evidence>
<evidence type="ECO:0000312" key="18">
    <source>
        <dbReference type="EMBL" id="CAB01547.1"/>
    </source>
</evidence>
<evidence type="ECO:0000312" key="19">
    <source>
        <dbReference type="MGI" id="MGI:1918885"/>
    </source>
</evidence>
<evidence type="ECO:0007744" key="20">
    <source>
    </source>
</evidence>
<protein>
    <recommendedName>
        <fullName>Microtubule-associated serine/threonine-protein kinase 4</fullName>
        <ecNumber>2.7.11.1</ecNumber>
    </recommendedName>
</protein>
<comment type="catalytic activity">
    <reaction evidence="3">
        <text>L-seryl-[protein] + ATP = O-phospho-L-seryl-[protein] + ADP + H(+)</text>
        <dbReference type="Rhea" id="RHEA:17989"/>
        <dbReference type="Rhea" id="RHEA-COMP:9863"/>
        <dbReference type="Rhea" id="RHEA-COMP:11604"/>
        <dbReference type="ChEBI" id="CHEBI:15378"/>
        <dbReference type="ChEBI" id="CHEBI:29999"/>
        <dbReference type="ChEBI" id="CHEBI:30616"/>
        <dbReference type="ChEBI" id="CHEBI:83421"/>
        <dbReference type="ChEBI" id="CHEBI:456216"/>
        <dbReference type="EC" id="2.7.11.1"/>
    </reaction>
</comment>
<comment type="catalytic activity">
    <reaction evidence="3">
        <text>L-threonyl-[protein] + ATP = O-phospho-L-threonyl-[protein] + ADP + H(+)</text>
        <dbReference type="Rhea" id="RHEA:46608"/>
        <dbReference type="Rhea" id="RHEA-COMP:11060"/>
        <dbReference type="Rhea" id="RHEA-COMP:11605"/>
        <dbReference type="ChEBI" id="CHEBI:15378"/>
        <dbReference type="ChEBI" id="CHEBI:30013"/>
        <dbReference type="ChEBI" id="CHEBI:30616"/>
        <dbReference type="ChEBI" id="CHEBI:61977"/>
        <dbReference type="ChEBI" id="CHEBI:456216"/>
        <dbReference type="EC" id="2.7.11.1"/>
    </reaction>
</comment>
<comment type="cofactor">
    <cofactor evidence="3">
        <name>Mg(2+)</name>
        <dbReference type="ChEBI" id="CHEBI:18420"/>
    </cofactor>
</comment>
<comment type="subcellular location">
    <subcellularLocation>
        <location evidence="3">Cytoplasm</location>
    </subcellularLocation>
</comment>
<comment type="alternative products">
    <event type="alternative splicing"/>
    <isoform>
        <id>Q811L6-1</id>
        <name evidence="9 11 12">1</name>
        <sequence type="displayed"/>
    </isoform>
    <isoform>
        <id>Q811L6-2</id>
        <name evidence="10">2</name>
        <sequence type="described" ref="VSP_041616 VSP_052478 VSP_052479 VSP_052480"/>
    </isoform>
</comment>
<comment type="similarity">
    <text evidence="14">Belongs to the protein kinase superfamily. AGC Ser/Thr protein kinase family.</text>
</comment>
<comment type="sequence caution" evidence="11">
    <conflict type="frameshift">
        <sequence resource="EMBL" id="AK090136"/>
    </conflict>
</comment>
<keyword id="KW-0025">Alternative splicing</keyword>
<keyword id="KW-0067">ATP-binding</keyword>
<keyword id="KW-0963">Cytoplasm</keyword>
<keyword id="KW-0418">Kinase</keyword>
<keyword id="KW-0460">Magnesium</keyword>
<keyword id="KW-0479">Metal-binding</keyword>
<keyword id="KW-0547">Nucleotide-binding</keyword>
<keyword id="KW-0597">Phosphoprotein</keyword>
<keyword id="KW-1185">Reference proteome</keyword>
<keyword id="KW-0723">Serine/threonine-protein kinase</keyword>
<keyword id="KW-0808">Transferase</keyword>
<dbReference type="EC" id="2.7.11.1"/>
<dbReference type="EMBL" id="AK032755">
    <property type="protein sequence ID" value="BAC28008.1"/>
    <property type="molecule type" value="mRNA"/>
</dbReference>
<dbReference type="EMBL" id="AK090136">
    <property type="status" value="NOT_ANNOTATED_CDS"/>
    <property type="molecule type" value="mRNA"/>
</dbReference>
<dbReference type="EMBL" id="AK137360">
    <property type="protein sequence ID" value="BAE23322.1"/>
    <property type="molecule type" value="mRNA"/>
</dbReference>
<dbReference type="EMBL" id="AC112791">
    <property type="status" value="NOT_ANNOTATED_CDS"/>
    <property type="molecule type" value="Genomic_DNA"/>
</dbReference>
<dbReference type="EMBL" id="AC114827">
    <property type="status" value="NOT_ANNOTATED_CDS"/>
    <property type="molecule type" value="Genomic_DNA"/>
</dbReference>
<dbReference type="EMBL" id="AC124387">
    <property type="status" value="NOT_ANNOTATED_CDS"/>
    <property type="molecule type" value="Genomic_DNA"/>
</dbReference>
<dbReference type="EMBL" id="AC161446">
    <property type="status" value="NOT_ANNOTATED_CDS"/>
    <property type="molecule type" value="Genomic_DNA"/>
</dbReference>
<dbReference type="EMBL" id="AC165290">
    <property type="status" value="NOT_ANNOTATED_CDS"/>
    <property type="molecule type" value="Genomic_DNA"/>
</dbReference>
<dbReference type="EMBL" id="AC167975">
    <property type="status" value="NOT_ANNOTATED_CDS"/>
    <property type="molecule type" value="Genomic_DNA"/>
</dbReference>
<dbReference type="EMBL" id="BC042511">
    <property type="protein sequence ID" value="AAH42511.1"/>
    <property type="molecule type" value="mRNA"/>
</dbReference>
<dbReference type="EMBL" id="AK129114">
    <property type="protein sequence ID" value="BAC97924.1"/>
    <property type="molecule type" value="mRNA"/>
</dbReference>
<dbReference type="EMBL" id="Z78145">
    <property type="protein sequence ID" value="CAB01547.1"/>
    <property type="molecule type" value="mRNA"/>
</dbReference>
<dbReference type="CCDS" id="CCDS49349.1">
    <molecule id="Q811L6-1"/>
</dbReference>
<dbReference type="RefSeq" id="NP_780380.2">
    <molecule id="Q811L6-1"/>
    <property type="nucleotide sequence ID" value="NM_175171.3"/>
</dbReference>
<dbReference type="SMR" id="Q811L6"/>
<dbReference type="BioGRID" id="236582">
    <property type="interactions" value="2"/>
</dbReference>
<dbReference type="FunCoup" id="Q811L6">
    <property type="interactions" value="1139"/>
</dbReference>
<dbReference type="STRING" id="10090.ENSMUSP00000128464"/>
<dbReference type="GlyGen" id="Q811L6">
    <property type="glycosylation" value="8 sites, 1 O-linked glycan (4 sites)"/>
</dbReference>
<dbReference type="iPTMnet" id="Q811L6"/>
<dbReference type="PhosphoSitePlus" id="Q811L6"/>
<dbReference type="jPOST" id="Q811L6"/>
<dbReference type="PaxDb" id="10090-ENSMUSP00000128464"/>
<dbReference type="PeptideAtlas" id="Q811L6"/>
<dbReference type="ProteomicsDB" id="292174">
    <molecule id="Q811L6-1"/>
</dbReference>
<dbReference type="ProteomicsDB" id="292175">
    <molecule id="Q811L6-2"/>
</dbReference>
<dbReference type="Pumba" id="Q811L6"/>
<dbReference type="Antibodypedia" id="627">
    <property type="antibodies" value="101 antibodies from 23 providers"/>
</dbReference>
<dbReference type="DNASU" id="328329"/>
<dbReference type="Ensembl" id="ENSMUST00000167058.8">
    <molecule id="Q811L6-1"/>
    <property type="protein sequence ID" value="ENSMUSP00000128464.2"/>
    <property type="gene ID" value="ENSMUSG00000034751.18"/>
</dbReference>
<dbReference type="GeneID" id="328329"/>
<dbReference type="KEGG" id="mmu:328329"/>
<dbReference type="UCSC" id="uc007rsb.2">
    <molecule id="Q811L6-1"/>
    <property type="organism name" value="mouse"/>
</dbReference>
<dbReference type="AGR" id="MGI:1918885"/>
<dbReference type="CTD" id="375449"/>
<dbReference type="MGI" id="MGI:1918885">
    <property type="gene designation" value="Mast4"/>
</dbReference>
<dbReference type="VEuPathDB" id="HostDB:ENSMUSG00000034751"/>
<dbReference type="eggNOG" id="KOG0606">
    <property type="taxonomic scope" value="Eukaryota"/>
</dbReference>
<dbReference type="GeneTree" id="ENSGT00940000156399"/>
<dbReference type="HOGENOM" id="CLU_000288_9_4_1"/>
<dbReference type="InParanoid" id="Q811L6"/>
<dbReference type="OMA" id="LERLGTX"/>
<dbReference type="OrthoDB" id="10070999at2759"/>
<dbReference type="PhylomeDB" id="Q811L6"/>
<dbReference type="TreeFam" id="TF313149"/>
<dbReference type="BRENDA" id="2.7.11.1">
    <property type="organism ID" value="3474"/>
</dbReference>
<dbReference type="BioGRID-ORCS" id="328329">
    <property type="hits" value="2 hits in 80 CRISPR screens"/>
</dbReference>
<dbReference type="ChiTaRS" id="Mast4">
    <property type="organism name" value="mouse"/>
</dbReference>
<dbReference type="PRO" id="PR:Q811L6"/>
<dbReference type="Proteomes" id="UP000000589">
    <property type="component" value="Chromosome 13"/>
</dbReference>
<dbReference type="RNAct" id="Q811L6">
    <property type="molecule type" value="protein"/>
</dbReference>
<dbReference type="Bgee" id="ENSMUSG00000034751">
    <property type="expression patterns" value="Expressed in humerus cartilage element and 226 other cell types or tissues"/>
</dbReference>
<dbReference type="ExpressionAtlas" id="Q811L6">
    <property type="expression patterns" value="baseline and differential"/>
</dbReference>
<dbReference type="GO" id="GO:0005737">
    <property type="term" value="C:cytoplasm"/>
    <property type="evidence" value="ECO:0007669"/>
    <property type="project" value="UniProtKB-SubCell"/>
</dbReference>
<dbReference type="GO" id="GO:0005524">
    <property type="term" value="F:ATP binding"/>
    <property type="evidence" value="ECO:0007669"/>
    <property type="project" value="UniProtKB-KW"/>
</dbReference>
<dbReference type="GO" id="GO:0000287">
    <property type="term" value="F:magnesium ion binding"/>
    <property type="evidence" value="ECO:0007669"/>
    <property type="project" value="InterPro"/>
</dbReference>
<dbReference type="GO" id="GO:0106310">
    <property type="term" value="F:protein serine kinase activity"/>
    <property type="evidence" value="ECO:0007669"/>
    <property type="project" value="RHEA"/>
</dbReference>
<dbReference type="GO" id="GO:0004674">
    <property type="term" value="F:protein serine/threonine kinase activity"/>
    <property type="evidence" value="ECO:0007669"/>
    <property type="project" value="UniProtKB-KW"/>
</dbReference>
<dbReference type="CDD" id="cd23076">
    <property type="entry name" value="PDZ_MAST4"/>
    <property type="match status" value="1"/>
</dbReference>
<dbReference type="CDD" id="cd05609">
    <property type="entry name" value="STKc_MAST"/>
    <property type="match status" value="1"/>
</dbReference>
<dbReference type="FunFam" id="3.30.200.20:FF:000457">
    <property type="entry name" value="Microtubule-associated serine/threonine-protein kinase"/>
    <property type="match status" value="1"/>
</dbReference>
<dbReference type="FunFam" id="1.10.510.10:FF:000012">
    <property type="entry name" value="microtubule-associated serine/threonine-protein kinase 2 isoform X1"/>
    <property type="match status" value="1"/>
</dbReference>
<dbReference type="FunFam" id="1.20.1480.20:FF:000001">
    <property type="entry name" value="microtubule-associated serine/threonine-protein kinase 4 isoform X1"/>
    <property type="match status" value="1"/>
</dbReference>
<dbReference type="FunFam" id="2.30.42.10:FF:000008">
    <property type="entry name" value="microtubule-associated serine/threonine-protein kinase 4 isoform X2"/>
    <property type="match status" value="1"/>
</dbReference>
<dbReference type="Gene3D" id="2.30.42.10">
    <property type="match status" value="1"/>
</dbReference>
<dbReference type="Gene3D" id="1.20.1480.20">
    <property type="entry name" value="MAST3 pre-PK domain-like"/>
    <property type="match status" value="1"/>
</dbReference>
<dbReference type="Gene3D" id="3.30.200.20">
    <property type="entry name" value="Phosphorylase Kinase, domain 1"/>
    <property type="match status" value="1"/>
</dbReference>
<dbReference type="Gene3D" id="1.10.510.10">
    <property type="entry name" value="Transferase(Phosphotransferase) domain 1"/>
    <property type="match status" value="1"/>
</dbReference>
<dbReference type="InterPro" id="IPR000961">
    <property type="entry name" value="AGC-kinase_C"/>
</dbReference>
<dbReference type="InterPro" id="IPR011009">
    <property type="entry name" value="Kinase-like_dom_sf"/>
</dbReference>
<dbReference type="InterPro" id="IPR037711">
    <property type="entry name" value="MAST"/>
</dbReference>
<dbReference type="InterPro" id="IPR015022">
    <property type="entry name" value="MAST_pre-PK_dom"/>
</dbReference>
<dbReference type="InterPro" id="IPR023142">
    <property type="entry name" value="MAST_pre-PK_dom_sf"/>
</dbReference>
<dbReference type="InterPro" id="IPR001478">
    <property type="entry name" value="PDZ"/>
</dbReference>
<dbReference type="InterPro" id="IPR041489">
    <property type="entry name" value="PDZ_6"/>
</dbReference>
<dbReference type="InterPro" id="IPR036034">
    <property type="entry name" value="PDZ_sf"/>
</dbReference>
<dbReference type="InterPro" id="IPR000719">
    <property type="entry name" value="Prot_kinase_dom"/>
</dbReference>
<dbReference type="InterPro" id="IPR008271">
    <property type="entry name" value="Ser/Thr_kinase_AS"/>
</dbReference>
<dbReference type="InterPro" id="IPR050236">
    <property type="entry name" value="Ser_Thr_kinase_AGC"/>
</dbReference>
<dbReference type="PANTHER" id="PTHR24356:SF224">
    <property type="entry name" value="MICROTUBULE-ASSOCIATED SERINE_THREONINE-PROTEIN KINASE 4"/>
    <property type="match status" value="1"/>
</dbReference>
<dbReference type="PANTHER" id="PTHR24356">
    <property type="entry name" value="SERINE/THREONINE-PROTEIN KINASE"/>
    <property type="match status" value="1"/>
</dbReference>
<dbReference type="Pfam" id="PF08926">
    <property type="entry name" value="DUF1908"/>
    <property type="match status" value="1"/>
</dbReference>
<dbReference type="Pfam" id="PF17820">
    <property type="entry name" value="PDZ_6"/>
    <property type="match status" value="1"/>
</dbReference>
<dbReference type="Pfam" id="PF00069">
    <property type="entry name" value="Pkinase"/>
    <property type="match status" value="1"/>
</dbReference>
<dbReference type="SMART" id="SM00228">
    <property type="entry name" value="PDZ"/>
    <property type="match status" value="1"/>
</dbReference>
<dbReference type="SMART" id="SM00220">
    <property type="entry name" value="S_TKc"/>
    <property type="match status" value="1"/>
</dbReference>
<dbReference type="SUPFAM" id="SSF140482">
    <property type="entry name" value="MAST3 pre-PK domain-like"/>
    <property type="match status" value="1"/>
</dbReference>
<dbReference type="SUPFAM" id="SSF50156">
    <property type="entry name" value="PDZ domain-like"/>
    <property type="match status" value="1"/>
</dbReference>
<dbReference type="SUPFAM" id="SSF56112">
    <property type="entry name" value="Protein kinase-like (PK-like)"/>
    <property type="match status" value="1"/>
</dbReference>
<dbReference type="PROSITE" id="PS51285">
    <property type="entry name" value="AGC_KINASE_CTER"/>
    <property type="match status" value="1"/>
</dbReference>
<dbReference type="PROSITE" id="PS50106">
    <property type="entry name" value="PDZ"/>
    <property type="match status" value="1"/>
</dbReference>
<dbReference type="PROSITE" id="PS50011">
    <property type="entry name" value="PROTEIN_KINASE_DOM"/>
    <property type="match status" value="1"/>
</dbReference>
<dbReference type="PROSITE" id="PS00108">
    <property type="entry name" value="PROTEIN_KINASE_ST"/>
    <property type="match status" value="1"/>
</dbReference>
<reference evidence="14 17" key="1">
    <citation type="journal article" date="2005" name="Science">
        <title>The transcriptional landscape of the mammalian genome.</title>
        <authorList>
            <person name="Carninci P."/>
            <person name="Kasukawa T."/>
            <person name="Katayama S."/>
            <person name="Gough J."/>
            <person name="Frith M.C."/>
            <person name="Maeda N."/>
            <person name="Oyama R."/>
            <person name="Ravasi T."/>
            <person name="Lenhard B."/>
            <person name="Wells C."/>
            <person name="Kodzius R."/>
            <person name="Shimokawa K."/>
            <person name="Bajic V.B."/>
            <person name="Brenner S.E."/>
            <person name="Batalov S."/>
            <person name="Forrest A.R."/>
            <person name="Zavolan M."/>
            <person name="Davis M.J."/>
            <person name="Wilming L.G."/>
            <person name="Aidinis V."/>
            <person name="Allen J.E."/>
            <person name="Ambesi-Impiombato A."/>
            <person name="Apweiler R."/>
            <person name="Aturaliya R.N."/>
            <person name="Bailey T.L."/>
            <person name="Bansal M."/>
            <person name="Baxter L."/>
            <person name="Beisel K.W."/>
            <person name="Bersano T."/>
            <person name="Bono H."/>
            <person name="Chalk A.M."/>
            <person name="Chiu K.P."/>
            <person name="Choudhary V."/>
            <person name="Christoffels A."/>
            <person name="Clutterbuck D.R."/>
            <person name="Crowe M.L."/>
            <person name="Dalla E."/>
            <person name="Dalrymple B.P."/>
            <person name="de Bono B."/>
            <person name="Della Gatta G."/>
            <person name="di Bernardo D."/>
            <person name="Down T."/>
            <person name="Engstrom P."/>
            <person name="Fagiolini M."/>
            <person name="Faulkner G."/>
            <person name="Fletcher C.F."/>
            <person name="Fukushima T."/>
            <person name="Furuno M."/>
            <person name="Futaki S."/>
            <person name="Gariboldi M."/>
            <person name="Georgii-Hemming P."/>
            <person name="Gingeras T.R."/>
            <person name="Gojobori T."/>
            <person name="Green R.E."/>
            <person name="Gustincich S."/>
            <person name="Harbers M."/>
            <person name="Hayashi Y."/>
            <person name="Hensch T.K."/>
            <person name="Hirokawa N."/>
            <person name="Hill D."/>
            <person name="Huminiecki L."/>
            <person name="Iacono M."/>
            <person name="Ikeo K."/>
            <person name="Iwama A."/>
            <person name="Ishikawa T."/>
            <person name="Jakt M."/>
            <person name="Kanapin A."/>
            <person name="Katoh M."/>
            <person name="Kawasawa Y."/>
            <person name="Kelso J."/>
            <person name="Kitamura H."/>
            <person name="Kitano H."/>
            <person name="Kollias G."/>
            <person name="Krishnan S.P."/>
            <person name="Kruger A."/>
            <person name="Kummerfeld S.K."/>
            <person name="Kurochkin I.V."/>
            <person name="Lareau L.F."/>
            <person name="Lazarevic D."/>
            <person name="Lipovich L."/>
            <person name="Liu J."/>
            <person name="Liuni S."/>
            <person name="McWilliam S."/>
            <person name="Madan Babu M."/>
            <person name="Madera M."/>
            <person name="Marchionni L."/>
            <person name="Matsuda H."/>
            <person name="Matsuzawa S."/>
            <person name="Miki H."/>
            <person name="Mignone F."/>
            <person name="Miyake S."/>
            <person name="Morris K."/>
            <person name="Mottagui-Tabar S."/>
            <person name="Mulder N."/>
            <person name="Nakano N."/>
            <person name="Nakauchi H."/>
            <person name="Ng P."/>
            <person name="Nilsson R."/>
            <person name="Nishiguchi S."/>
            <person name="Nishikawa S."/>
            <person name="Nori F."/>
            <person name="Ohara O."/>
            <person name="Okazaki Y."/>
            <person name="Orlando V."/>
            <person name="Pang K.C."/>
            <person name="Pavan W.J."/>
            <person name="Pavesi G."/>
            <person name="Pesole G."/>
            <person name="Petrovsky N."/>
            <person name="Piazza S."/>
            <person name="Reed J."/>
            <person name="Reid J.F."/>
            <person name="Ring B.Z."/>
            <person name="Ringwald M."/>
            <person name="Rost B."/>
            <person name="Ruan Y."/>
            <person name="Salzberg S.L."/>
            <person name="Sandelin A."/>
            <person name="Schneider C."/>
            <person name="Schoenbach C."/>
            <person name="Sekiguchi K."/>
            <person name="Semple C.A."/>
            <person name="Seno S."/>
            <person name="Sessa L."/>
            <person name="Sheng Y."/>
            <person name="Shibata Y."/>
            <person name="Shimada H."/>
            <person name="Shimada K."/>
            <person name="Silva D."/>
            <person name="Sinclair B."/>
            <person name="Sperling S."/>
            <person name="Stupka E."/>
            <person name="Sugiura K."/>
            <person name="Sultana R."/>
            <person name="Takenaka Y."/>
            <person name="Taki K."/>
            <person name="Tammoja K."/>
            <person name="Tan S.L."/>
            <person name="Tang S."/>
            <person name="Taylor M.S."/>
            <person name="Tegner J."/>
            <person name="Teichmann S.A."/>
            <person name="Ueda H.R."/>
            <person name="van Nimwegen E."/>
            <person name="Verardo R."/>
            <person name="Wei C.L."/>
            <person name="Yagi K."/>
            <person name="Yamanishi H."/>
            <person name="Zabarovsky E."/>
            <person name="Zhu S."/>
            <person name="Zimmer A."/>
            <person name="Hide W."/>
            <person name="Bult C."/>
            <person name="Grimmond S.M."/>
            <person name="Teasdale R.D."/>
            <person name="Liu E.T."/>
            <person name="Brusic V."/>
            <person name="Quackenbush J."/>
            <person name="Wahlestedt C."/>
            <person name="Mattick J.S."/>
            <person name="Hume D.A."/>
            <person name="Kai C."/>
            <person name="Sasaki D."/>
            <person name="Tomaru Y."/>
            <person name="Fukuda S."/>
            <person name="Kanamori-Katayama M."/>
            <person name="Suzuki M."/>
            <person name="Aoki J."/>
            <person name="Arakawa T."/>
            <person name="Iida J."/>
            <person name="Imamura K."/>
            <person name="Itoh M."/>
            <person name="Kato T."/>
            <person name="Kawaji H."/>
            <person name="Kawagashira N."/>
            <person name="Kawashima T."/>
            <person name="Kojima M."/>
            <person name="Kondo S."/>
            <person name="Konno H."/>
            <person name="Nakano K."/>
            <person name="Ninomiya N."/>
            <person name="Nishio T."/>
            <person name="Okada M."/>
            <person name="Plessy C."/>
            <person name="Shibata K."/>
            <person name="Shiraki T."/>
            <person name="Suzuki S."/>
            <person name="Tagami M."/>
            <person name="Waki K."/>
            <person name="Watahiki A."/>
            <person name="Okamura-Oho Y."/>
            <person name="Suzuki H."/>
            <person name="Kawai J."/>
            <person name="Hayashizaki Y."/>
        </authorList>
    </citation>
    <scope>NUCLEOTIDE SEQUENCE [LARGE SCALE MRNA] (ISOFORM 1)</scope>
    <source>
        <strain evidence="17">C57BL/6J</strain>
        <tissue evidence="11">Bone marrow</tissue>
        <tissue evidence="17">Cerebellum</tissue>
        <tissue>Wolffian duct</tissue>
    </source>
</reference>
<reference key="2">
    <citation type="journal article" date="2009" name="PLoS Biol.">
        <title>Lineage-specific biology revealed by a finished genome assembly of the mouse.</title>
        <authorList>
            <person name="Church D.M."/>
            <person name="Goodstadt L."/>
            <person name="Hillier L.W."/>
            <person name="Zody M.C."/>
            <person name="Goldstein S."/>
            <person name="She X."/>
            <person name="Bult C.J."/>
            <person name="Agarwala R."/>
            <person name="Cherry J.L."/>
            <person name="DiCuccio M."/>
            <person name="Hlavina W."/>
            <person name="Kapustin Y."/>
            <person name="Meric P."/>
            <person name="Maglott D."/>
            <person name="Birtle Z."/>
            <person name="Marques A.C."/>
            <person name="Graves T."/>
            <person name="Zhou S."/>
            <person name="Teague B."/>
            <person name="Potamousis K."/>
            <person name="Churas C."/>
            <person name="Place M."/>
            <person name="Herschleb J."/>
            <person name="Runnheim R."/>
            <person name="Forrest D."/>
            <person name="Amos-Landgraf J."/>
            <person name="Schwartz D.C."/>
            <person name="Cheng Z."/>
            <person name="Lindblad-Toh K."/>
            <person name="Eichler E.E."/>
            <person name="Ponting C.P."/>
        </authorList>
    </citation>
    <scope>NUCLEOTIDE SEQUENCE [LARGE SCALE GENOMIC DNA]</scope>
    <source>
        <strain>C57BL/6J</strain>
    </source>
</reference>
<reference evidence="14 15" key="3">
    <citation type="journal article" date="2004" name="Genome Res.">
        <title>The status, quality, and expansion of the NIH full-length cDNA project: the Mammalian Gene Collection (MGC).</title>
        <authorList>
            <consortium name="The MGC Project Team"/>
        </authorList>
    </citation>
    <scope>NUCLEOTIDE SEQUENCE [LARGE SCALE MRNA] OF 346-2618 (ISOFORM 2)</scope>
    <source>
        <strain evidence="15">Czech II</strain>
        <tissue evidence="15">Mammary gland</tissue>
    </source>
</reference>
<reference evidence="14 16" key="4">
    <citation type="journal article" date="2003" name="DNA Res.">
        <title>Prediction of the coding sequences of mouse homologues of KIAA gene: III. The complete nucleotide sequences of 500 mouse KIAA-homologous cDNAs identified by screening of terminal sequences of cDNA clones randomly sampled from size-fractionated libraries.</title>
        <authorList>
            <person name="Okazaki N."/>
            <person name="Kikuno R."/>
            <person name="Ohara R."/>
            <person name="Inamoto S."/>
            <person name="Koseki H."/>
            <person name="Hiraoka S."/>
            <person name="Saga Y."/>
            <person name="Nagase T."/>
            <person name="Ohara O."/>
            <person name="Koga H."/>
        </authorList>
    </citation>
    <scope>NUCLEOTIDE SEQUENCE [LARGE SCALE MRNA] OF 1671-2618 (ISOFORM 1)</scope>
    <source>
        <tissue evidence="16">Brain</tissue>
    </source>
</reference>
<reference evidence="14 18" key="5">
    <citation type="journal article" date="1997" name="Genomics">
        <title>Cloning of the genes encoding two murine and human cochlear unconventional type I myosins.</title>
        <authorList>
            <person name="Crozet F."/>
            <person name="El-Amraoui A."/>
            <person name="Blanchard S."/>
            <person name="Lenoir M."/>
            <person name="Ripoll C."/>
            <person name="Vago P."/>
            <person name="Hamel C."/>
            <person name="Fizames C."/>
            <person name="Levi-Acobas F."/>
            <person name="Depetris D."/>
            <person name="Mattei M.-G."/>
            <person name="Weil D."/>
            <person name="Pujol R."/>
            <person name="Petit C."/>
        </authorList>
    </citation>
    <scope>NUCLEOTIDE SEQUENCE [MRNA] OF 2398-2498 (ISOFORM 1)</scope>
    <source>
        <tissue evidence="18">Cochlea</tissue>
    </source>
</reference>
<reference key="6">
    <citation type="journal article" date="2010" name="Cell">
        <title>A tissue-specific atlas of mouse protein phosphorylation and expression.</title>
        <authorList>
            <person name="Huttlin E.L."/>
            <person name="Jedrychowski M.P."/>
            <person name="Elias J.E."/>
            <person name="Goswami T."/>
            <person name="Rad R."/>
            <person name="Beausoleil S.A."/>
            <person name="Villen J."/>
            <person name="Haas W."/>
            <person name="Sowa M.E."/>
            <person name="Gygi S.P."/>
        </authorList>
    </citation>
    <scope>PHOSPHORYLATION [LARGE SCALE ANALYSIS] AT SER-204; SER-211; SER-1290; SER-1368; SER-1395 AND SER-2549</scope>
    <scope>IDENTIFICATION BY MASS SPECTROMETRY [LARGE SCALE ANALYSIS]</scope>
    <source>
        <tissue>Brown adipose tissue</tissue>
        <tissue>Heart</tissue>
        <tissue>Lung</tissue>
        <tissue>Pancreas</tissue>
        <tissue>Spleen</tissue>
        <tissue>Testis</tissue>
    </source>
</reference>
<sequence length="2618" mass="284004">MGEKVSEAPEPVPRGCSGHGARTLVSSAAAVSSEGASSAESSSGSETLSEEGEPSRFSCRSQPPRPPGGALGTRLPAAWAPARVALERGVPTLPLPHPGGAVLPVPQVSSASQEEQDEELDHILSPPPMPFRKCSNPDVACGLGKSLKYKRQLSEDGKQLRRGSLGGALTGRYLLPNPVAGQAWPASAETSNLVRMRSQALGQSAPSLTASLKELSLPRRGSLCRTSNRKSLIGNGQSPALPRPHSPLSAHAGNSPQDSPRNFSPSASAHFSFARRTDGRRWSLASLPSSGYGTNTPSSTVSSSCSSQEKLHQLPYQPTPDELHFLSKHFCTTESIATENRCRNTPMRPRSRSLSPGRSPACCDHEIIMMNHVYKERFPKATAQMEERLKEIITSYSPDHVLPLADGVLSFTHHQIIELARDCLDKSHQGLITSRYFFELQHKLDKLLQEAHDRSESGELAFIKQLVRKILIVIARPARLLECLEFDPEEFYYLLEAAEGHAKEGQGIKTDIPRYIISQLGLNKDPLEEMAQLGNYDSRTAETPEMDESVSSSNTSLRLRRKPRESDFETIKLISNGAYGAVYFVRHKESRQRFAMKKINKQNLILRNQIQQAFVERDILTFAENPFVVSMYCSFETRRHLCMVMEYVEGGDCATLMKNMGPLPVDMARMYFAETVLALEYLHNYGIVHRDLKPDNLLVTSMGHIKLTDFGLSKVGLMSMTTNLYEGHIEKDAREFLDKQVCGTPEYIAPEVILRQGYGKPVDWWAMGIILYEFLVGCVPFFGDTPEELFGQVISDEINWPEKDEAPPPDAQELITLLLRQNPLERLGTGGAYEVKQHRFFRSLDWNSLLRQKAEFIPQLESEDDTSYFDTRSEKYHHMETEEEDDTNDEDFTVEIRQFSSCSHRFSKVFSSIDRITQNSGEDKDDSEDKTKSTTLPSTETLSWSSEYSEMQQLSTSNSSDTESNRCKLSSGLLPKLAISTDGEQDEAVPCSGDPREEPEKPVPPSEECTQEEPEVTTPASTISSSTLSVGSFSEHLDQINGRSECVDSTDNSSKPSSEPTSHVARQRLESTEKKKISGKVTKSLSASALSLMIPGDMFAVSPLGSPMSPHSLSSDPSSSRDSSPSRDSSAASASPHQPIVIHSSGKNYGFTIRAIRVYVGDSDIYTVHHIVWNVEEGSPAYQAGLKAGDLITHINGEPVHGLVHTEVIELLLKSGNKVSITTTPFENTSIKTGPARRNSYKGRMVRRSKKSKKKESLERRRSLFKKLAKQPSPLLHTSRSFSCLNRSLSSGESLPGSPTHSLSPRSPTPSYRSTPDFPSGTNSSQSSSPSSSAPNSPAGSGHIRPSTLHGLAPKLSGQRYRSGRRKSAGSIPLSPLARTPSPTPQPTSPQRSPSPLLGHSLGNAKITQAFPSKMHSPPTIVRHIVRPKSAEPPRSPLLKRVQSEEKLSPSYGSDKKLLCSRKHSLEVTQEEVQREQCQREVTLQSLEENVCDAPSLSRARPVEQGCLKRPVSRKVGRQESVDDLDRDKLKAKVVVKKPEEKHESHQKPHSLGGDSESYALFRLEEREKKVYSKGLERSGHFENTSAELPSVGSLLKDTLHKQASVRASEGVTSDGAACSLTPGEHSQSLGDFKRASASGILHDSVCPISDRPAPGKVEYSEKASQAKELLRSEKLDSKLANIDYLRKKMSLDDKDDSHCAILKPKITSSAHECLPGNPIRPMAGQQETPPASENRAFINSTHTPQMSAVSFVPLKALAGRVENGGEKAGLAAPESPVRKSPSEYKLEGRSVSCLKPIEGTLDIALLSGPHASKTELLSPEPAQSPSPGINVGPCVPLALPGSSGKKGDSTSLREPSSANLKVNKSYLLEPRFLPPSRALQDSLAASGPEPKSKPERKLIHPSARSPATVTESNLQQKEGGPATHQDRSTDTRNLPGPGQTLHNVDLPRLCTRAPLPPEGTPAKEKPCLKEPSAKVKSEWSAVRDDGHRDPCAKLCPAETGKASDSSKPLPSGGRTQPDFYKQTQTSEKAWAHAKTNHKDSQDEVKSLAREDSASLLYEKEIGRARKGPEPKPEVPATRCPPQPPGIEGEKREKLSAAPSLQKQAPKEPDRKEQTSQRPGGSGPQQPPPTKELSNSASWQHGSSPSHTLKKEPGTKAAAAEPSTSLHDTPRSATATTTAIATTTTTTSAGHSDCSSHKARPGPDPSPSKSKHQDRSLSSQKLSAGSAKGKEPVTQPLGGSIREGKGGSKGPVDTFSAVLTTQGKASDVLVQGEGRVSIIVHTEECPLDAKLKNTNGGCPPEMQAKHPPRQGHLSEAADQKPLIAGEKQSPSPKHPKPSTVKDYPSLCRQTDRSPSHQATTGDRKAEGKKCTDALYVAAPEGYKPEASPSLHHGETGLRGSERPPMGMGKGFSEPKGKGPGPQKSLAETGKPSGMKRSPSATVQSSLRSAAPPEKSLSYSASFPEAQPGVREVPAANSSPSSAKATGGTSEFPAPSSRDHRKLQSGGDGRSQMIKSDSLPSFRLSTSALESHFQDPQVPIASGHRGRALSVTAATGEPKGRELAQPPPVRKQNACREATRAPPAPSTDRSLPLSSEKDFVVRQRRGKETLRSSPHKKAS</sequence>
<gene>
    <name evidence="15 19" type="primary">Mast4</name>
</gene>
<proteinExistence type="evidence at protein level"/>
<feature type="chain" id="PRO_0000293629" description="Microtubule-associated serine/threonine-protein kinase 4">
    <location>
        <begin position="1"/>
        <end position="2618"/>
    </location>
</feature>
<feature type="domain" description="Protein kinase" evidence="5">
    <location>
        <begin position="568"/>
        <end position="841"/>
    </location>
</feature>
<feature type="domain" description="AGC-kinase C-terminal" evidence="6">
    <location>
        <begin position="842"/>
        <end position="904"/>
    </location>
</feature>
<feature type="domain" description="PDZ" evidence="4">
    <location>
        <begin position="1139"/>
        <end position="1227"/>
    </location>
</feature>
<feature type="region of interest" description="Disordered" evidence="8">
    <location>
        <begin position="1"/>
        <end position="74"/>
    </location>
</feature>
<feature type="region of interest" description="Disordered" evidence="8">
    <location>
        <begin position="221"/>
        <end position="267"/>
    </location>
</feature>
<feature type="region of interest" description="Disordered" evidence="8">
    <location>
        <begin position="287"/>
        <end position="310"/>
    </location>
</feature>
<feature type="region of interest" description="Disordered" evidence="8">
    <location>
        <begin position="540"/>
        <end position="559"/>
    </location>
</feature>
<feature type="region of interest" description="Disordered" evidence="8">
    <location>
        <begin position="917"/>
        <end position="1081"/>
    </location>
</feature>
<feature type="region of interest" description="Disordered" evidence="8">
    <location>
        <begin position="1105"/>
        <end position="1141"/>
    </location>
</feature>
<feature type="region of interest" description="Disordered" evidence="8">
    <location>
        <begin position="1225"/>
        <end position="1260"/>
    </location>
</feature>
<feature type="region of interest" description="Disordered" evidence="8">
    <location>
        <begin position="1287"/>
        <end position="1456"/>
    </location>
</feature>
<feature type="region of interest" description="Disordered" evidence="8">
    <location>
        <begin position="1516"/>
        <end position="1557"/>
    </location>
</feature>
<feature type="region of interest" description="Disordered" evidence="8">
    <location>
        <begin position="1607"/>
        <end position="1631"/>
    </location>
</feature>
<feature type="region of interest" description="Disordered" evidence="8">
    <location>
        <begin position="1767"/>
        <end position="1786"/>
    </location>
</feature>
<feature type="region of interest" description="Disordered" evidence="8">
    <location>
        <begin position="1815"/>
        <end position="1858"/>
    </location>
</feature>
<feature type="region of interest" description="Disordered" evidence="8">
    <location>
        <begin position="1882"/>
        <end position="2254"/>
    </location>
</feature>
<feature type="region of interest" description="Disordered" evidence="8">
    <location>
        <begin position="2288"/>
        <end position="2369"/>
    </location>
</feature>
<feature type="region of interest" description="Disordered" evidence="8">
    <location>
        <begin position="2381"/>
        <end position="2618"/>
    </location>
</feature>
<feature type="compositionally biased region" description="Low complexity" evidence="8">
    <location>
        <begin position="23"/>
        <end position="47"/>
    </location>
</feature>
<feature type="compositionally biased region" description="Polar residues" evidence="8">
    <location>
        <begin position="224"/>
        <end position="238"/>
    </location>
</feature>
<feature type="compositionally biased region" description="Polar residues" evidence="8">
    <location>
        <begin position="252"/>
        <end position="262"/>
    </location>
</feature>
<feature type="compositionally biased region" description="Polar residues" evidence="8">
    <location>
        <begin position="287"/>
        <end position="297"/>
    </location>
</feature>
<feature type="compositionally biased region" description="Low complexity" evidence="8">
    <location>
        <begin position="298"/>
        <end position="307"/>
    </location>
</feature>
<feature type="compositionally biased region" description="Polar residues" evidence="8">
    <location>
        <begin position="936"/>
        <end position="962"/>
    </location>
</feature>
<feature type="compositionally biased region" description="Low complexity" evidence="8">
    <location>
        <begin position="1017"/>
        <end position="1034"/>
    </location>
</feature>
<feature type="compositionally biased region" description="Polar residues" evidence="8">
    <location>
        <begin position="1047"/>
        <end position="1061"/>
    </location>
</feature>
<feature type="compositionally biased region" description="Basic and acidic residues" evidence="8">
    <location>
        <begin position="1067"/>
        <end position="1076"/>
    </location>
</feature>
<feature type="compositionally biased region" description="Low complexity" evidence="8">
    <location>
        <begin position="1105"/>
        <end position="1137"/>
    </location>
</feature>
<feature type="compositionally biased region" description="Basic residues" evidence="8">
    <location>
        <begin position="1239"/>
        <end position="1254"/>
    </location>
</feature>
<feature type="compositionally biased region" description="Low complexity" evidence="8">
    <location>
        <begin position="1288"/>
        <end position="1341"/>
    </location>
</feature>
<feature type="compositionally biased region" description="Basic and acidic residues" evidence="8">
    <location>
        <begin position="1442"/>
        <end position="1456"/>
    </location>
</feature>
<feature type="compositionally biased region" description="Basic and acidic residues" evidence="8">
    <location>
        <begin position="1517"/>
        <end position="1547"/>
    </location>
</feature>
<feature type="compositionally biased region" description="Basic and acidic residues" evidence="8">
    <location>
        <begin position="1777"/>
        <end position="1786"/>
    </location>
</feature>
<feature type="compositionally biased region" description="Polar residues" evidence="8">
    <location>
        <begin position="1906"/>
        <end position="1917"/>
    </location>
</feature>
<feature type="compositionally biased region" description="Basic and acidic residues" evidence="8">
    <location>
        <begin position="1962"/>
        <end position="1992"/>
    </location>
</feature>
<feature type="compositionally biased region" description="Basic and acidic residues" evidence="8">
    <location>
        <begin position="2037"/>
        <end position="2073"/>
    </location>
</feature>
<feature type="compositionally biased region" description="Basic and acidic residues" evidence="8">
    <location>
        <begin position="2105"/>
        <end position="2115"/>
    </location>
</feature>
<feature type="compositionally biased region" description="Polar residues" evidence="8">
    <location>
        <begin position="2132"/>
        <end position="2147"/>
    </location>
</feature>
<feature type="compositionally biased region" description="Low complexity" evidence="8">
    <location>
        <begin position="2173"/>
        <end position="2187"/>
    </location>
</feature>
<feature type="compositionally biased region" description="Basic and acidic residues" evidence="8">
    <location>
        <begin position="2391"/>
        <end position="2401"/>
    </location>
</feature>
<feature type="compositionally biased region" description="Polar residues" evidence="8">
    <location>
        <begin position="2438"/>
        <end position="2447"/>
    </location>
</feature>
<feature type="compositionally biased region" description="Low complexity" evidence="8">
    <location>
        <begin position="2473"/>
        <end position="2484"/>
    </location>
</feature>
<feature type="compositionally biased region" description="Polar residues" evidence="8">
    <location>
        <begin position="2512"/>
        <end position="2528"/>
    </location>
</feature>
<feature type="compositionally biased region" description="Basic and acidic residues" evidence="8">
    <location>
        <begin position="2594"/>
        <end position="2609"/>
    </location>
</feature>
<feature type="active site" description="Proton acceptor" evidence="2 5 7">
    <location>
        <position position="691"/>
    </location>
</feature>
<feature type="binding site" evidence="2 5">
    <location>
        <begin position="574"/>
        <end position="582"/>
    </location>
    <ligand>
        <name>ATP</name>
        <dbReference type="ChEBI" id="CHEBI:30616"/>
    </ligand>
</feature>
<feature type="binding site" evidence="2 5">
    <location>
        <position position="597"/>
    </location>
    <ligand>
        <name>ATP</name>
        <dbReference type="ChEBI" id="CHEBI:30616"/>
    </ligand>
</feature>
<feature type="modified residue" description="Phosphoserine" evidence="20">
    <location>
        <position position="204"/>
    </location>
</feature>
<feature type="modified residue" description="Phosphoserine" evidence="20">
    <location>
        <position position="211"/>
    </location>
</feature>
<feature type="modified residue" description="Phosphoserine" evidence="1">
    <location>
        <position position="268"/>
    </location>
</feature>
<feature type="modified residue" description="Phosphoserine" evidence="1">
    <location>
        <position position="912"/>
    </location>
</feature>
<feature type="modified residue" description="Phosphoserine" evidence="20">
    <location>
        <position position="1290"/>
    </location>
</feature>
<feature type="modified residue" description="Phosphoserine" evidence="20">
    <location>
        <position position="1368"/>
    </location>
</feature>
<feature type="modified residue" description="Phosphoserine" evidence="1">
    <location>
        <position position="1382"/>
    </location>
</feature>
<feature type="modified residue" description="Phosphoserine" evidence="20">
    <location>
        <position position="1395"/>
    </location>
</feature>
<feature type="modified residue" description="Phosphoserine" evidence="1">
    <location>
        <position position="1417"/>
    </location>
</feature>
<feature type="modified residue" description="Phosphoserine" evidence="1">
    <location>
        <position position="1465"/>
    </location>
</feature>
<feature type="modified residue" description="Phosphoserine" evidence="1">
    <location>
        <position position="1521"/>
    </location>
</feature>
<feature type="modified residue" description="Phosphoserine" evidence="1">
    <location>
        <position position="1776"/>
    </location>
</feature>
<feature type="modified residue" description="Phosphoserine" evidence="1">
    <location>
        <position position="1819"/>
    </location>
</feature>
<feature type="modified residue" description="Phosphoserine" evidence="1">
    <location>
        <position position="1906"/>
    </location>
</feature>
<feature type="modified residue" description="Phosphoserine" evidence="1">
    <location>
        <position position="2439"/>
    </location>
</feature>
<feature type="modified residue" description="Phosphoserine" evidence="1">
    <location>
        <position position="2517"/>
    </location>
</feature>
<feature type="modified residue" description="Phosphoserine" evidence="20">
    <location>
        <position position="2549"/>
    </location>
</feature>
<feature type="splice variant" id="VSP_041616" description="In isoform 2." evidence="13">
    <location>
        <begin position="350"/>
        <end position="521"/>
    </location>
</feature>
<feature type="splice variant" id="VSP_052478" description="In isoform 2." evidence="13">
    <location>
        <begin position="1030"/>
        <end position="1096"/>
    </location>
</feature>
<feature type="splice variant" id="VSP_052479" description="In isoform 2." evidence="13">
    <original>SLFKKLAKQPSPLLHTSRSF</original>
    <variation>DRKKKKKRELSSRCLPSSNR</variation>
    <location>
        <begin position="1263"/>
        <end position="1282"/>
    </location>
</feature>
<feature type="splice variant" id="VSP_052480" description="In isoform 2." evidence="13">
    <location>
        <begin position="1283"/>
        <end position="2618"/>
    </location>
</feature>
<feature type="sequence conflict" description="In Ref. 3; AAH42511." evidence="14" ref="3">
    <original>M</original>
    <variation>T</variation>
    <location>
        <position position="546"/>
    </location>
</feature>
<feature type="sequence conflict" description="In Ref. 4; BAC97924." evidence="14" ref="4">
    <original>A</original>
    <variation>T</variation>
    <location>
        <position position="1963"/>
    </location>
</feature>
<feature type="sequence conflict" description="In Ref. 1; BAC28008." evidence="14" ref="1">
    <original>K</original>
    <variation>I</variation>
    <location>
        <position position="1977"/>
    </location>
</feature>
<feature type="sequence conflict" description="In Ref. 1; BAC28008." evidence="14" ref="1">
    <original>S</original>
    <variation>G</variation>
    <location>
        <position position="2143"/>
    </location>
</feature>
<feature type="sequence conflict" description="In Ref. 4; BAC97924." evidence="14" ref="4">
    <original>A</original>
    <variation>ATA</variation>
    <location>
        <position position="2181"/>
    </location>
</feature>
<feature type="sequence conflict" description="In Ref. 1; BAC28008." evidence="14" ref="1">
    <original>S</original>
    <variation>G</variation>
    <location>
        <position position="2444"/>
    </location>
</feature>
<feature type="sequence conflict" description="In Ref. 1; BAE23322." evidence="14" ref="1">
    <original>D</original>
    <variation>E</variation>
    <location>
        <position position="2507"/>
    </location>
</feature>